<comment type="function">
    <text evidence="3 4">Transfers the sialyl group (N-acetyl-alpha-neuraminyl or NeuAc) from CMP-NeuAc to the GalNAc residue on the NeuAc-alpha-2,3-Gal-beta-1,3-GalNAc sequence of glycoproteins and glycolipids forming an alpha-2,6-linkage. Produces branched type disialyl structures by transfer of a sialyl group onto a GalNAc residue inside the backbone core chains (PubMed:10207017, PubMed:10601645). Prefers O-glycans to glycoproteins or glycolipids (PubMed:10207017).</text>
</comment>
<comment type="catalytic activity">
    <reaction evidence="3 4">
        <text>an alpha-Neu5Ac-(2-&gt;3)-beta-D-Gal-(1-&gt;3)-D-GlcNAc derivative + CMP-N-acetyl-beta-neuraminate = an alpha-Neu5Ac-(2-&gt;3)-beta-D-Gal-(1-&gt;3)-[alpha-Neu5Ac-(2-&gt;6)]-D-GlcNAc derivative + CMP + H(+)</text>
        <dbReference type="Rhea" id="RHEA:53896"/>
        <dbReference type="ChEBI" id="CHEBI:15378"/>
        <dbReference type="ChEBI" id="CHEBI:57812"/>
        <dbReference type="ChEBI" id="CHEBI:60377"/>
        <dbReference type="ChEBI" id="CHEBI:146021"/>
        <dbReference type="ChEBI" id="CHEBI:149714"/>
        <dbReference type="EC" id="2.4.3.7"/>
    </reaction>
    <physiologicalReaction direction="left-to-right" evidence="8 9">
        <dbReference type="Rhea" id="RHEA:53897"/>
    </physiologicalReaction>
</comment>
<comment type="catalytic activity">
    <reaction evidence="3">
        <text>N-acetyl-alpha-neuraminosyl-(2-&gt;3)-beta-D-galactosyl-(1-&gt;3)-N-acetyl-D-galactosamine + CMP-N-acetyl-beta-neuraminate = N-acetyl-alpha-neuraminosyl-(2-&gt;3)-beta-D-galactosyl-(1-&gt;3)-[N-acetyl-alpha-neuraminosyl-(2-&gt;6)]-N-acetyl-D-galactosamine + CMP + H(+)</text>
        <dbReference type="Rhea" id="RHEA:65288"/>
        <dbReference type="ChEBI" id="CHEBI:15378"/>
        <dbReference type="ChEBI" id="CHEBI:57812"/>
        <dbReference type="ChEBI" id="CHEBI:60377"/>
        <dbReference type="ChEBI" id="CHEBI:156406"/>
        <dbReference type="ChEBI" id="CHEBI:156407"/>
    </reaction>
    <physiologicalReaction direction="left-to-right" evidence="8">
        <dbReference type="Rhea" id="RHEA:65289"/>
    </physiologicalReaction>
</comment>
<comment type="catalytic activity">
    <reaction evidence="3 4">
        <text>a ganglioside GM1b (d18:1(4E)) + CMP-N-acetyl-beta-neuraminate = a ganglioside GD1alpha (d18:1(4E)) + CMP + H(+)</text>
        <dbReference type="Rhea" id="RHEA:41968"/>
        <dbReference type="ChEBI" id="CHEBI:15378"/>
        <dbReference type="ChEBI" id="CHEBI:57812"/>
        <dbReference type="ChEBI" id="CHEBI:60377"/>
        <dbReference type="ChEBI" id="CHEBI:78568"/>
        <dbReference type="ChEBI" id="CHEBI:78569"/>
    </reaction>
    <physiologicalReaction direction="left-to-right" evidence="8 9">
        <dbReference type="Rhea" id="RHEA:41969"/>
    </physiologicalReaction>
</comment>
<comment type="catalytic activity">
    <reaction evidence="3">
        <text>3-O-[alpha-Neu5Ac-(2-&gt;3)-beta-D-Gal-(1-&gt;3)-alpha-D-GalNAc]-L-Ser-[protein] + CMP-N-acetyl-beta-neuraminate = a 3-O-{alpha-Neu5Ac-(2-&gt;3)-beta-D-Gal-(1-&gt;3)-[alpha-Neu5Ac-(2-&gt;6)]-alpha-D-GalNAc}-L-seryl-[protein] + CMP + H(+)</text>
        <dbReference type="Rhea" id="RHEA:65280"/>
        <dbReference type="Rhea" id="RHEA-COMP:16760"/>
        <dbReference type="Rhea" id="RHEA-COMP:16761"/>
        <dbReference type="ChEBI" id="CHEBI:15378"/>
        <dbReference type="ChEBI" id="CHEBI:57812"/>
        <dbReference type="ChEBI" id="CHEBI:60377"/>
        <dbReference type="ChEBI" id="CHEBI:156395"/>
        <dbReference type="ChEBI" id="CHEBI:156397"/>
    </reaction>
    <physiologicalReaction direction="left-to-right" evidence="8">
        <dbReference type="Rhea" id="RHEA:65281"/>
    </physiologicalReaction>
</comment>
<comment type="catalytic activity">
    <reaction evidence="3">
        <text>3-O-[alpha-Neu5Ac-(2-&gt;3)-beta-D-Gal-(1-&gt;3)-alpha-D-GalNAc]-L-Thr-[protein] + CMP-N-acetyl-beta-neuraminate = a 3-O-{alpha-Neu5Ac-(2-&gt;3)-beta-D-Gal-(1-&gt;3)-[alpha-Neu5Ac-(2-&gt;6)]-alpha-D-GalNAc}-L-threonyl-[protein] + CMP + H(+)</text>
        <dbReference type="Rhea" id="RHEA:65284"/>
        <dbReference type="Rhea" id="RHEA-COMP:16762"/>
        <dbReference type="Rhea" id="RHEA-COMP:16763"/>
        <dbReference type="ChEBI" id="CHEBI:15378"/>
        <dbReference type="ChEBI" id="CHEBI:57812"/>
        <dbReference type="ChEBI" id="CHEBI:60377"/>
        <dbReference type="ChEBI" id="CHEBI:156396"/>
        <dbReference type="ChEBI" id="CHEBI:156398"/>
    </reaction>
    <physiologicalReaction direction="left-to-right" evidence="8">
        <dbReference type="Rhea" id="RHEA:65285"/>
    </physiologicalReaction>
</comment>
<comment type="pathway">
    <text evidence="8 9">Protein modification; protein glycosylation.</text>
</comment>
<comment type="pathway">
    <text evidence="8 9">Glycolipid biosynthesis.</text>
</comment>
<comment type="subcellular location">
    <subcellularLocation>
        <location evidence="1">Golgi apparatus membrane</location>
        <topology evidence="1">Single-pass type II membrane protein</topology>
    </subcellularLocation>
</comment>
<comment type="alternative products">
    <event type="alternative splicing"/>
    <isoform>
        <id>Q9R2B6-1</id>
        <name>1</name>
        <name>Long 2</name>
        <sequence type="displayed"/>
    </isoform>
    <isoform>
        <id>Q9R2B6-2</id>
        <name>2</name>
        <name>Long 1</name>
        <sequence type="described" ref="VSP_001788"/>
    </isoform>
    <isoform>
        <id>Q9R2B6-3</id>
        <name>3</name>
        <name>Short</name>
        <sequence type="described" ref="VSP_001787"/>
    </isoform>
    <text>Experimental confirmation may be lacking for some isoforms.</text>
</comment>
<comment type="tissue specificity">
    <text evidence="3">High expression in brain and colon and to a lesser extent in lung, heart, kidney, spleen and thymus.</text>
</comment>
<comment type="developmental stage">
    <text evidence="3">Developmentally regulated.</text>
</comment>
<comment type="similarity">
    <text evidence="7">Belongs to the glycosyltransferase 29 family.</text>
</comment>
<comment type="online information" name="Functional Glycomics Gateway - GTase">
    <link uri="http://www.functionalglycomics.org/glycomics/molecule/jsp/glycoEnzyme/viewGlycoEnzyme.jsp?gbpId=gt_mou_653"/>
    <text>ST6GalNAc IV</text>
</comment>
<gene>
    <name type="primary">St6galnac4</name>
    <name type="synonym">Siat7d</name>
</gene>
<feature type="chain" id="PRO_0000149279" description="Alpha-N-acetyl-neuraminyl-2,3-beta-galactosyl-1,3-N-acetyl-galactosaminide alpha-2,6-sialyltransferase">
    <location>
        <begin position="1"/>
        <end position="360"/>
    </location>
</feature>
<feature type="topological domain" description="Cytoplasmic" evidence="2">
    <location>
        <begin position="1"/>
        <end position="71"/>
    </location>
</feature>
<feature type="transmembrane region" description="Helical; Signal-anchor for type II membrane protein" evidence="2">
    <location>
        <begin position="72"/>
        <end position="94"/>
    </location>
</feature>
<feature type="topological domain" description="Lumenal" evidence="2">
    <location>
        <begin position="95"/>
        <end position="360"/>
    </location>
</feature>
<feature type="glycosylation site" description="N-linked (GlcNAc...) asparagine" evidence="2">
    <location>
        <position position="193"/>
    </location>
</feature>
<feature type="disulfide bond" evidence="1">
    <location>
        <begin position="134"/>
        <end position="283"/>
    </location>
</feature>
<feature type="splice variant" id="VSP_001787" description="In isoform 3." evidence="7">
    <location>
        <begin position="1"/>
        <end position="58"/>
    </location>
</feature>
<feature type="splice variant" id="VSP_001788" description="In isoform 2." evidence="7">
    <original>MEHVVTCWRLKLLSWPVFLIWICLSLAS</original>
    <variation>MSSEQRILSPQRTPIRSF</variation>
    <location>
        <begin position="1"/>
        <end position="28"/>
    </location>
</feature>
<keyword id="KW-0025">Alternative splicing</keyword>
<keyword id="KW-1015">Disulfide bond</keyword>
<keyword id="KW-0325">Glycoprotein</keyword>
<keyword id="KW-0328">Glycosyltransferase</keyword>
<keyword id="KW-0333">Golgi apparatus</keyword>
<keyword id="KW-0443">Lipid metabolism</keyword>
<keyword id="KW-0472">Membrane</keyword>
<keyword id="KW-1185">Reference proteome</keyword>
<keyword id="KW-0730">Sialic acid</keyword>
<keyword id="KW-0735">Signal-anchor</keyword>
<keyword id="KW-0808">Transferase</keyword>
<keyword id="KW-0812">Transmembrane</keyword>
<keyword id="KW-1133">Transmembrane helix</keyword>
<protein>
    <recommendedName>
        <fullName>Alpha-N-acetyl-neuraminyl-2,3-beta-galactosyl-1,3-N-acetyl-galactosaminide alpha-2,6-sialyltransferase</fullName>
        <ecNumber evidence="3 4">2.4.3.7</ecNumber>
    </recommendedName>
    <alternativeName>
        <fullName>NeuAc-alpha-2,3-Gal-beta-1,3-GalNAc-alpha-2,6-sialyltransferase</fullName>
    </alternativeName>
    <alternativeName>
        <fullName evidence="5 6">ST6GalNAc IV</fullName>
        <shortName>ST6GalNAcIV</shortName>
    </alternativeName>
    <alternativeName>
        <fullName>Sialyltransferase 7D</fullName>
        <shortName>SIAT7-D</shortName>
    </alternativeName>
</protein>
<name>SIA7D_MOUSE</name>
<sequence>MEHVVTCWRLKLLSWPVFLIWICLSLASVSLISWDQLPAFLIPSTGDSSLQTAKSRDSMKAPGRLLLLTLCILTFSAVCVFLCCWACLPLCLATCLDRHLPAAPRSTVPGPLHFSGYSSVPDGKPLIRELCHSCAVVSNSGQMLGSGLGAQIDGAECVLRMNQAPTVGFEEDVGQRTTLRVISHTSVPLLLRNYSHYFQHARDTLYVVWGQGRHMDRVLGGRTYRTLLQLTRMYPGLQVYTFTERMMAYCDQIFQDETGKNRRQSGSFLSTGWFTMIPALELCEEIVVYGMVSDSYCSEKSPRSVPYHYFEKGRLDECQMYRLHEQAPRSAHRFITEKAVFSRWAKKRPIVFAHPSWRAK</sequence>
<reference key="1">
    <citation type="journal article" date="1999" name="J. Biol. Chem.">
        <title>Molecular cloning and functional expression of two members of mouse NeuAc-alpha-2,3Gal-beta-1,3GalNAc GalNAc-alpha2,6-sialyltransferase family, ST6GalNAc III and IV.</title>
        <authorList>
            <person name="Lee Y.-C."/>
            <person name="Kaufman M."/>
            <person name="Kitazume-Kawaguchi S."/>
            <person name="Kono M."/>
            <person name="Takashima S."/>
            <person name="Kurosawa N."/>
            <person name="Liu H."/>
            <person name="Pircher H."/>
            <person name="Tsuji S."/>
        </authorList>
    </citation>
    <scope>NUCLEOTIDE SEQUENCE [MRNA]</scope>
    <scope>FUNCTION</scope>
    <scope>CATALYTIC ACTIVITY</scope>
    <scope>TISSUE SPECIFICITY</scope>
    <scope>ALTERNATIVE SPLICING</scope>
    <scope>DEVELOPMENTAL STAGE</scope>
    <source>
        <strain>ICR</strain>
        <tissue>Brain</tissue>
    </source>
</reference>
<reference key="2">
    <citation type="journal article" date="2000" name="J. Biochem.">
        <title>Comparative analysis of the genomic structures and promoter activities of mouse Siaa2,3Galb1,3GalNAc GalNAca2,6-sialyltransferase genes (ST6GalNAc III and IV): characterization of their Sp1 binding.</title>
        <authorList>
            <person name="Takashima S."/>
            <person name="Kurosawa N."/>
            <person name="Tachida Y."/>
            <person name="Inoue M."/>
            <person name="Tsuji S."/>
        </authorList>
    </citation>
    <scope>NUCLEOTIDE SEQUENCE [GENOMIC DNA] OF 299-360</scope>
    <source>
        <strain>C57BL/6J</strain>
    </source>
</reference>
<reference key="3">
    <citation type="journal article" date="1999" name="FEBS Lett.">
        <title>A novel glycosyltransferase with a polyglutamine repeat; a new candidate for GD1alpha synthase (ST6GalNAc V).</title>
        <authorList>
            <person name="Ikehara Y."/>
            <person name="Shimizu N."/>
            <person name="Kono M."/>
            <person name="Nishihara S."/>
            <person name="Nakanishi H."/>
            <person name="Kitamura T."/>
            <person name="Narimatsu H."/>
            <person name="Tsuji S."/>
            <person name="Tatematsu M."/>
        </authorList>
    </citation>
    <scope>FUNCTION</scope>
    <scope>CATALYTIC ACTIVITY</scope>
</reference>
<proteinExistence type="evidence at protein level"/>
<organism>
    <name type="scientific">Mus musculus</name>
    <name type="common">Mouse</name>
    <dbReference type="NCBI Taxonomy" id="10090"/>
    <lineage>
        <taxon>Eukaryota</taxon>
        <taxon>Metazoa</taxon>
        <taxon>Chordata</taxon>
        <taxon>Craniata</taxon>
        <taxon>Vertebrata</taxon>
        <taxon>Euteleostomi</taxon>
        <taxon>Mammalia</taxon>
        <taxon>Eutheria</taxon>
        <taxon>Euarchontoglires</taxon>
        <taxon>Glires</taxon>
        <taxon>Rodentia</taxon>
        <taxon>Myomorpha</taxon>
        <taxon>Muroidea</taxon>
        <taxon>Muridae</taxon>
        <taxon>Murinae</taxon>
        <taxon>Mus</taxon>
        <taxon>Mus</taxon>
    </lineage>
</organism>
<dbReference type="EC" id="2.4.3.7" evidence="3 4"/>
<dbReference type="EMBL" id="Y15780">
    <property type="protein sequence ID" value="CAB43514.1"/>
    <property type="molecule type" value="mRNA"/>
</dbReference>
<dbReference type="EMBL" id="Y15780">
    <property type="protein sequence ID" value="CAB43515.1"/>
    <property type="molecule type" value="mRNA"/>
</dbReference>
<dbReference type="EMBL" id="Y15779">
    <property type="protein sequence ID" value="CAB43507.1"/>
    <property type="molecule type" value="mRNA"/>
</dbReference>
<dbReference type="EMBL" id="Y15779">
    <property type="protein sequence ID" value="CAB43508.1"/>
    <property type="molecule type" value="mRNA"/>
</dbReference>
<dbReference type="EMBL" id="AJ007310">
    <property type="protein sequence ID" value="CAA07446.1"/>
    <property type="molecule type" value="mRNA"/>
</dbReference>
<dbReference type="EMBL" id="Y19057">
    <property type="protein sequence ID" value="CAB93948.1"/>
    <property type="molecule type" value="Genomic_DNA"/>
</dbReference>
<dbReference type="CCDS" id="CCDS15921.1">
    <molecule id="Q9R2B6-3"/>
</dbReference>
<dbReference type="RefSeq" id="NP_001263354.1">
    <property type="nucleotide sequence ID" value="NM_001276425.1"/>
</dbReference>
<dbReference type="RefSeq" id="NP_035503.1">
    <property type="nucleotide sequence ID" value="NM_011373.3"/>
</dbReference>
<dbReference type="SMR" id="Q9R2B6"/>
<dbReference type="FunCoup" id="Q9R2B6">
    <property type="interactions" value="42"/>
</dbReference>
<dbReference type="STRING" id="10090.ENSMUSP00000099882"/>
<dbReference type="SwissLipids" id="SLP:000000785"/>
<dbReference type="CAZy" id="GT29">
    <property type="family name" value="Glycosyltransferase Family 29"/>
</dbReference>
<dbReference type="GlyCosmos" id="Q9R2B6">
    <property type="glycosylation" value="1 site, No reported glycans"/>
</dbReference>
<dbReference type="GlyGen" id="Q9R2B6">
    <property type="glycosylation" value="1 site, 1 N-linked glycan (1 site)"/>
</dbReference>
<dbReference type="iPTMnet" id="Q9R2B6"/>
<dbReference type="PhosphoSitePlus" id="Q9R2B6"/>
<dbReference type="PaxDb" id="10090-ENSMUSP00000099882"/>
<dbReference type="ProteomicsDB" id="257170">
    <molecule id="Q9R2B6-1"/>
</dbReference>
<dbReference type="ProteomicsDB" id="257171">
    <molecule id="Q9R2B6-2"/>
</dbReference>
<dbReference type="ProteomicsDB" id="257172">
    <molecule id="Q9R2B6-3"/>
</dbReference>
<dbReference type="DNASU" id="20448"/>
<dbReference type="GeneID" id="20448"/>
<dbReference type="KEGG" id="mmu:20448"/>
<dbReference type="AGR" id="MGI:1341894"/>
<dbReference type="CTD" id="27090"/>
<dbReference type="MGI" id="MGI:1341894">
    <property type="gene designation" value="St6galnac4"/>
</dbReference>
<dbReference type="eggNOG" id="KOG2692">
    <property type="taxonomic scope" value="Eukaryota"/>
</dbReference>
<dbReference type="InParanoid" id="Q9R2B6"/>
<dbReference type="OrthoDB" id="10264956at2759"/>
<dbReference type="Reactome" id="R-MMU-4085001">
    <property type="pathway name" value="Sialic acid metabolism"/>
</dbReference>
<dbReference type="Reactome" id="R-MMU-977068">
    <property type="pathway name" value="Termination of O-glycan biosynthesis"/>
</dbReference>
<dbReference type="UniPathway" id="UPA00378"/>
<dbReference type="BioGRID-ORCS" id="20448">
    <property type="hits" value="4 hits in 80 CRISPR screens"/>
</dbReference>
<dbReference type="ChiTaRS" id="St6galnac4">
    <property type="organism name" value="mouse"/>
</dbReference>
<dbReference type="PRO" id="PR:Q9R2B6"/>
<dbReference type="Proteomes" id="UP000000589">
    <property type="component" value="Unplaced"/>
</dbReference>
<dbReference type="RNAct" id="Q9R2B6">
    <property type="molecule type" value="protein"/>
</dbReference>
<dbReference type="GO" id="GO:0000139">
    <property type="term" value="C:Golgi membrane"/>
    <property type="evidence" value="ECO:0007669"/>
    <property type="project" value="UniProtKB-SubCell"/>
</dbReference>
<dbReference type="GO" id="GO:0047290">
    <property type="term" value="F:alpha-N-acetylneuraminyl-2,3-beta-galactosyl-1,3-N-acetyl-galactosaminide 6-alpha-sialyltransferase activity"/>
    <property type="evidence" value="ECO:0007669"/>
    <property type="project" value="RHEA"/>
</dbReference>
<dbReference type="GO" id="GO:0006629">
    <property type="term" value="P:lipid metabolic process"/>
    <property type="evidence" value="ECO:0007669"/>
    <property type="project" value="UniProtKB-KW"/>
</dbReference>
<dbReference type="GO" id="GO:0006486">
    <property type="term" value="P:protein glycosylation"/>
    <property type="evidence" value="ECO:0007669"/>
    <property type="project" value="UniProtKB-UniPathway"/>
</dbReference>
<dbReference type="FunFam" id="3.90.1480.20:FF:000008">
    <property type="entry name" value="ST6 N-acetylgalactosaminide alpha-2,6-sialyltransferase 3"/>
    <property type="match status" value="1"/>
</dbReference>
<dbReference type="Gene3D" id="3.90.1480.20">
    <property type="entry name" value="Glycosyl transferase family 29"/>
    <property type="match status" value="1"/>
</dbReference>
<dbReference type="InterPro" id="IPR001675">
    <property type="entry name" value="Glyco_trans_29"/>
</dbReference>
<dbReference type="InterPro" id="IPR038578">
    <property type="entry name" value="GT29-like_sf"/>
</dbReference>
<dbReference type="PANTHER" id="PTHR45906">
    <property type="entry name" value="ALPHA-N-ACETYL-NEURAMINYL-2,3-BETA-GALACTOSYL-1, 3-N-ACETYL-GALACTOSAMINIDE ALPHA-2,6-SIALYLTRANSFERASE-LIKE"/>
    <property type="match status" value="1"/>
</dbReference>
<dbReference type="PANTHER" id="PTHR45906:SF4">
    <property type="entry name" value="ALPHA-N-ACETYL-NEURAMINYL-2,3-BETA-GALACTOSYL-1,3-N-ACETYL-GALACTOSAMINIDE ALPHA-2,6-SIALYLTRANSFERASE"/>
    <property type="match status" value="1"/>
</dbReference>
<dbReference type="Pfam" id="PF00777">
    <property type="entry name" value="Glyco_transf_29"/>
    <property type="match status" value="1"/>
</dbReference>
<accession>Q9R2B6</accession>
<accession>O88725</accession>
<accession>Q9JHP0</accession>
<accession>Q9QUP9</accession>
<accession>Q9R2B5</accession>
<evidence type="ECO:0000250" key="1"/>
<evidence type="ECO:0000255" key="2"/>
<evidence type="ECO:0000269" key="3">
    <source>
    </source>
</evidence>
<evidence type="ECO:0000269" key="4">
    <source>
    </source>
</evidence>
<evidence type="ECO:0000303" key="5">
    <source>
    </source>
</evidence>
<evidence type="ECO:0000303" key="6">
    <source>
    </source>
</evidence>
<evidence type="ECO:0000305" key="7"/>
<evidence type="ECO:0000305" key="8">
    <source>
    </source>
</evidence>
<evidence type="ECO:0000305" key="9">
    <source>
    </source>
</evidence>